<name>YCF3_OLTVI</name>
<keyword id="KW-0150">Chloroplast</keyword>
<keyword id="KW-0472">Membrane</keyword>
<keyword id="KW-0602">Photosynthesis</keyword>
<keyword id="KW-0934">Plastid</keyword>
<keyword id="KW-0677">Repeat</keyword>
<keyword id="KW-0793">Thylakoid</keyword>
<keyword id="KW-0802">TPR repeat</keyword>
<accession>Q20ET3</accession>
<organism>
    <name type="scientific">Oltmannsiellopsis viridis</name>
    <name type="common">Marine flagellate</name>
    <name type="synonym">Oltmannsiella viridis</name>
    <dbReference type="NCBI Taxonomy" id="51324"/>
    <lineage>
        <taxon>Eukaryota</taxon>
        <taxon>Viridiplantae</taxon>
        <taxon>Chlorophyta</taxon>
        <taxon>Ulvophyceae</taxon>
        <taxon>Oltmannsiellopsidales</taxon>
        <taxon>Oltmannsiellopsidaceae</taxon>
        <taxon>Oltmannsiellopsis</taxon>
    </lineage>
</organism>
<geneLocation type="chloroplast"/>
<proteinExistence type="inferred from homology"/>
<sequence>MPRSQRNDNFIDKTFTVVADILVKVLPTSNREKQAFTYYRDGMAAQAEGEYAEALQNYYQALRLEIDPYDRSYILYNIGLIYTCNGEHGRALEYYYQALERNPSLPQALNNIAVIYHYRGEQAIERGQSEISKLLFDKAADYWKEAIRLAPTNYLEAQSWLNQYTN</sequence>
<reference key="1">
    <citation type="journal article" date="2006" name="BMC Biol.">
        <title>The complete chloroplast DNA sequence of the green alga Oltmannsiellopsis viridis reveals a distinctive quadripartite architecture in the chloroplast genome of early diverging ulvophytes.</title>
        <authorList>
            <person name="Pombert J.-F."/>
            <person name="Lemieux C."/>
            <person name="Turmel M."/>
        </authorList>
    </citation>
    <scope>NUCLEOTIDE SEQUENCE [LARGE SCALE GENOMIC DNA]</scope>
</reference>
<dbReference type="EMBL" id="DQ291132">
    <property type="protein sequence ID" value="ABB81980.1"/>
    <property type="molecule type" value="Genomic_DNA"/>
</dbReference>
<dbReference type="EMBL" id="DQ291132">
    <property type="protein sequence ID" value="ABB82011.1"/>
    <property type="molecule type" value="Genomic_DNA"/>
</dbReference>
<dbReference type="SMR" id="Q20ET3"/>
<dbReference type="GO" id="GO:0009535">
    <property type="term" value="C:chloroplast thylakoid membrane"/>
    <property type="evidence" value="ECO:0007669"/>
    <property type="project" value="UniProtKB-SubCell"/>
</dbReference>
<dbReference type="GO" id="GO:0015979">
    <property type="term" value="P:photosynthesis"/>
    <property type="evidence" value="ECO:0007669"/>
    <property type="project" value="UniProtKB-UniRule"/>
</dbReference>
<dbReference type="Gene3D" id="1.25.40.10">
    <property type="entry name" value="Tetratricopeptide repeat domain"/>
    <property type="match status" value="1"/>
</dbReference>
<dbReference type="HAMAP" id="MF_00439">
    <property type="entry name" value="Ycf3"/>
    <property type="match status" value="1"/>
</dbReference>
<dbReference type="InterPro" id="IPR022818">
    <property type="entry name" value="PSI_Ycf3_assembly"/>
</dbReference>
<dbReference type="InterPro" id="IPR011990">
    <property type="entry name" value="TPR-like_helical_dom_sf"/>
</dbReference>
<dbReference type="InterPro" id="IPR019734">
    <property type="entry name" value="TPR_rpt"/>
</dbReference>
<dbReference type="NCBIfam" id="NF002725">
    <property type="entry name" value="PRK02603.1"/>
    <property type="match status" value="1"/>
</dbReference>
<dbReference type="Pfam" id="PF00515">
    <property type="entry name" value="TPR_1"/>
    <property type="match status" value="1"/>
</dbReference>
<dbReference type="SMART" id="SM00028">
    <property type="entry name" value="TPR"/>
    <property type="match status" value="3"/>
</dbReference>
<dbReference type="SUPFAM" id="SSF48452">
    <property type="entry name" value="TPR-like"/>
    <property type="match status" value="1"/>
</dbReference>
<dbReference type="PROSITE" id="PS50005">
    <property type="entry name" value="TPR"/>
    <property type="match status" value="3"/>
</dbReference>
<dbReference type="PROSITE" id="PS50293">
    <property type="entry name" value="TPR_REGION"/>
    <property type="match status" value="1"/>
</dbReference>
<protein>
    <recommendedName>
        <fullName evidence="1">Photosystem I assembly protein Ycf3</fullName>
    </recommendedName>
</protein>
<gene>
    <name evidence="1" type="primary">ycf3-A</name>
</gene>
<gene>
    <name evidence="1" type="primary">ycf3-B</name>
</gene>
<evidence type="ECO:0000255" key="1">
    <source>
        <dbReference type="HAMAP-Rule" id="MF_00439"/>
    </source>
</evidence>
<feature type="chain" id="PRO_0000275628" description="Photosystem I assembly protein Ycf3">
    <location>
        <begin position="1"/>
        <end position="166"/>
    </location>
</feature>
<feature type="repeat" description="TPR 1">
    <location>
        <begin position="35"/>
        <end position="68"/>
    </location>
</feature>
<feature type="repeat" description="TPR 2">
    <location>
        <begin position="72"/>
        <end position="105"/>
    </location>
</feature>
<feature type="repeat" description="TPR 3">
    <location>
        <begin position="120"/>
        <end position="153"/>
    </location>
</feature>
<comment type="function">
    <text evidence="1">Essential for the assembly of the photosystem I (PSI) complex. May act as a chaperone-like factor to guide the assembly of the PSI subunits.</text>
</comment>
<comment type="subcellular location">
    <subcellularLocation>
        <location evidence="1">Plastid</location>
        <location evidence="1">Chloroplast thylakoid membrane</location>
        <topology evidence="1">Peripheral membrane protein</topology>
    </subcellularLocation>
</comment>
<comment type="similarity">
    <text evidence="1">Belongs to the Ycf3 family.</text>
</comment>